<dbReference type="EC" id="6.3.2.2" evidence="1"/>
<dbReference type="EMBL" id="CP000948">
    <property type="protein sequence ID" value="ACB03812.1"/>
    <property type="molecule type" value="Genomic_DNA"/>
</dbReference>
<dbReference type="RefSeq" id="WP_000611804.1">
    <property type="nucleotide sequence ID" value="NC_010473.1"/>
</dbReference>
<dbReference type="SMR" id="B1XCM1"/>
<dbReference type="KEGG" id="ecd:ECDH10B_2856"/>
<dbReference type="HOGENOM" id="CLU_020728_3_0_6"/>
<dbReference type="UniPathway" id="UPA00142">
    <property type="reaction ID" value="UER00209"/>
</dbReference>
<dbReference type="GO" id="GO:0005829">
    <property type="term" value="C:cytosol"/>
    <property type="evidence" value="ECO:0007669"/>
    <property type="project" value="TreeGrafter"/>
</dbReference>
<dbReference type="GO" id="GO:0005524">
    <property type="term" value="F:ATP binding"/>
    <property type="evidence" value="ECO:0007669"/>
    <property type="project" value="UniProtKB-KW"/>
</dbReference>
<dbReference type="GO" id="GO:0004357">
    <property type="term" value="F:glutamate-cysteine ligase activity"/>
    <property type="evidence" value="ECO:0007669"/>
    <property type="project" value="UniProtKB-UniRule"/>
</dbReference>
<dbReference type="GO" id="GO:0046872">
    <property type="term" value="F:metal ion binding"/>
    <property type="evidence" value="ECO:0007669"/>
    <property type="project" value="TreeGrafter"/>
</dbReference>
<dbReference type="GO" id="GO:0006750">
    <property type="term" value="P:glutathione biosynthetic process"/>
    <property type="evidence" value="ECO:0007669"/>
    <property type="project" value="UniProtKB-UniRule"/>
</dbReference>
<dbReference type="FunFam" id="3.30.590.20:FF:000001">
    <property type="entry name" value="Glutamate--cysteine ligase"/>
    <property type="match status" value="1"/>
</dbReference>
<dbReference type="Gene3D" id="3.30.590.20">
    <property type="match status" value="1"/>
</dbReference>
<dbReference type="HAMAP" id="MF_00578">
    <property type="entry name" value="Glu_cys_ligase"/>
    <property type="match status" value="1"/>
</dbReference>
<dbReference type="InterPro" id="IPR014746">
    <property type="entry name" value="Gln_synth/guanido_kin_cat_dom"/>
</dbReference>
<dbReference type="InterPro" id="IPR007370">
    <property type="entry name" value="Glu_cys_ligase"/>
</dbReference>
<dbReference type="InterPro" id="IPR006334">
    <property type="entry name" value="Glut_cys_ligase"/>
</dbReference>
<dbReference type="NCBIfam" id="TIGR01434">
    <property type="entry name" value="glu_cys_ligase"/>
    <property type="match status" value="1"/>
</dbReference>
<dbReference type="PANTHER" id="PTHR38761">
    <property type="entry name" value="GLUTAMATE--CYSTEINE LIGASE"/>
    <property type="match status" value="1"/>
</dbReference>
<dbReference type="PANTHER" id="PTHR38761:SF1">
    <property type="entry name" value="GLUTAMATE--CYSTEINE LIGASE"/>
    <property type="match status" value="1"/>
</dbReference>
<dbReference type="Pfam" id="PF04262">
    <property type="entry name" value="Glu_cys_ligase"/>
    <property type="match status" value="1"/>
</dbReference>
<dbReference type="SUPFAM" id="SSF55931">
    <property type="entry name" value="Glutamine synthetase/guanido kinase"/>
    <property type="match status" value="1"/>
</dbReference>
<proteinExistence type="inferred from homology"/>
<organism>
    <name type="scientific">Escherichia coli (strain K12 / DH10B)</name>
    <dbReference type="NCBI Taxonomy" id="316385"/>
    <lineage>
        <taxon>Bacteria</taxon>
        <taxon>Pseudomonadati</taxon>
        <taxon>Pseudomonadota</taxon>
        <taxon>Gammaproteobacteria</taxon>
        <taxon>Enterobacterales</taxon>
        <taxon>Enterobacteriaceae</taxon>
        <taxon>Escherichia</taxon>
    </lineage>
</organism>
<keyword id="KW-0067">ATP-binding</keyword>
<keyword id="KW-0317">Glutathione biosynthesis</keyword>
<keyword id="KW-0436">Ligase</keyword>
<keyword id="KW-0547">Nucleotide-binding</keyword>
<reference key="1">
    <citation type="journal article" date="2008" name="J. Bacteriol.">
        <title>The complete genome sequence of Escherichia coli DH10B: insights into the biology of a laboratory workhorse.</title>
        <authorList>
            <person name="Durfee T."/>
            <person name="Nelson R."/>
            <person name="Baldwin S."/>
            <person name="Plunkett G. III"/>
            <person name="Burland V."/>
            <person name="Mau B."/>
            <person name="Petrosino J.F."/>
            <person name="Qin X."/>
            <person name="Muzny D.M."/>
            <person name="Ayele M."/>
            <person name="Gibbs R.A."/>
            <person name="Csorgo B."/>
            <person name="Posfai G."/>
            <person name="Weinstock G.M."/>
            <person name="Blattner F.R."/>
        </authorList>
    </citation>
    <scope>NUCLEOTIDE SEQUENCE [LARGE SCALE GENOMIC DNA]</scope>
    <source>
        <strain>K12 / DH10B</strain>
    </source>
</reference>
<name>GSH1_ECODH</name>
<sequence>MIPDVSQALAWLEKHPQALKGIQRGLERETLRVNADGTLATTGHPEALGSALTHKWITTDFAEALLEFITPVDGDIEHMLTFMRDLHRYTARNMGDERMWPLSMPCYIAEGQDIELAQYGTSNTGRFKTLYREGLKNRYGALMQTISGVHYNFSLPMAFWQAKCGDISGADAKEKISAGYFRVIRNYYRFGWVIPYLFGASPAICSSFLQGKPTSLPFEKTECGMYYLPYATSLRLSDLGYTNKSQSNLGITFNDLYEYVAGLKQAIKTPSEEYAKIGIEKDGKRLQINSNVLQIENELYAPIRPKRVTRSGESPSDALLRGGIEYIEVRSLDINPFSPIGVDEQQVRFLDLFMVWCALADAPEMSSSELACTRVNWNRVILEGRKPGLTLGIGCETAQFPLPQVGKDLFRDLKRVAQTLDSINGGEAYQKVCDELVACFDNPDLTFSARILRSMIDTGIGGTGKAFAEAYRNLLREEPLEILREEDFVAEREASERRQQEMEAADTEPFAVWLEKHA</sequence>
<accession>B1XCM1</accession>
<evidence type="ECO:0000255" key="1">
    <source>
        <dbReference type="HAMAP-Rule" id="MF_00578"/>
    </source>
</evidence>
<protein>
    <recommendedName>
        <fullName evidence="1">Glutamate--cysteine ligase</fullName>
        <ecNumber evidence="1">6.3.2.2</ecNumber>
    </recommendedName>
    <alternativeName>
        <fullName evidence="1">Gamma-ECS</fullName>
        <shortName evidence="1">GCS</shortName>
    </alternativeName>
    <alternativeName>
        <fullName evidence="1">Gamma-glutamylcysteine synthetase</fullName>
    </alternativeName>
</protein>
<feature type="chain" id="PRO_1000129591" description="Glutamate--cysteine ligase">
    <location>
        <begin position="1"/>
        <end position="518"/>
    </location>
</feature>
<comment type="catalytic activity">
    <reaction evidence="1">
        <text>L-cysteine + L-glutamate + ATP = gamma-L-glutamyl-L-cysteine + ADP + phosphate + H(+)</text>
        <dbReference type="Rhea" id="RHEA:13285"/>
        <dbReference type="ChEBI" id="CHEBI:15378"/>
        <dbReference type="ChEBI" id="CHEBI:29985"/>
        <dbReference type="ChEBI" id="CHEBI:30616"/>
        <dbReference type="ChEBI" id="CHEBI:35235"/>
        <dbReference type="ChEBI" id="CHEBI:43474"/>
        <dbReference type="ChEBI" id="CHEBI:58173"/>
        <dbReference type="ChEBI" id="CHEBI:456216"/>
        <dbReference type="EC" id="6.3.2.2"/>
    </reaction>
</comment>
<comment type="pathway">
    <text evidence="1">Sulfur metabolism; glutathione biosynthesis; glutathione from L-cysteine and L-glutamate: step 1/2.</text>
</comment>
<comment type="similarity">
    <text evidence="1">Belongs to the glutamate--cysteine ligase type 1 family. Type 1 subfamily.</text>
</comment>
<gene>
    <name evidence="1" type="primary">gshA</name>
    <name type="ordered locus">ECDH10B_2856</name>
</gene>